<gene>
    <name evidence="1" type="primary">glmM</name>
    <name type="ordered locus">Bfl100</name>
</gene>
<evidence type="ECO:0000255" key="1">
    <source>
        <dbReference type="HAMAP-Rule" id="MF_01554"/>
    </source>
</evidence>
<reference key="1">
    <citation type="journal article" date="2003" name="Proc. Natl. Acad. Sci. U.S.A.">
        <title>The genome sequence of Blochmannia floridanus: comparative analysis of reduced genomes.</title>
        <authorList>
            <person name="Gil R."/>
            <person name="Silva F.J."/>
            <person name="Zientz E."/>
            <person name="Delmotte F."/>
            <person name="Gonzalez-Candelas F."/>
            <person name="Latorre A."/>
            <person name="Rausell C."/>
            <person name="Kamerbeek J."/>
            <person name="Gadau J."/>
            <person name="Hoelldobler B."/>
            <person name="van Ham R.C.H.J."/>
            <person name="Gross R."/>
            <person name="Moya A."/>
        </authorList>
    </citation>
    <scope>NUCLEOTIDE SEQUENCE [LARGE SCALE GENOMIC DNA]</scope>
</reference>
<organism>
    <name type="scientific">Blochmanniella floridana</name>
    <dbReference type="NCBI Taxonomy" id="203907"/>
    <lineage>
        <taxon>Bacteria</taxon>
        <taxon>Pseudomonadati</taxon>
        <taxon>Pseudomonadota</taxon>
        <taxon>Gammaproteobacteria</taxon>
        <taxon>Enterobacterales</taxon>
        <taxon>Enterobacteriaceae</taxon>
        <taxon>ant endosymbionts</taxon>
        <taxon>Candidatus Blochmanniella</taxon>
    </lineage>
</organism>
<proteinExistence type="inferred from homology"/>
<sequence>MKRSKYFGTDGIRGRVGLSPITPDFILKLGWAAGKVLSNYGSGRSKQVIIGKDTRISGYMLESALEAGLAASGLSAALTGPMPTPAIAYLTRTFRAEAGIVISASHNPFYDNGIKFFSIKGTKLDTQVEYFIETELNKCLKCIQPKLLGKAKRIIDAAGRYIEFCKGTFPAHLSLKKLRIVVDCANGATYHIAPNVLRELGADVIAISCNPNGININNKCGSTDIRRLRTQVLLKKADLGIAYDGDGDRVIMVDHIGNKVDGDQMLYILAKEYLYQRKLHGGIVGTWMSNMGLALALRELNIPFVRANVGDRSVLLMLREKGWYIGGENSGHIVLLDKTTTGDGIIVALQILSTMVSNSVSLYELCNNVYLLPQILINVYCSGFINPLESSVVKKEIQIIKQELSDQGRILLRQSGTEPYIRVMVEGKHYSKISYLANRIVSVIKGEMRSVN</sequence>
<comment type="function">
    <text evidence="1">Catalyzes the conversion of glucosamine-6-phosphate to glucosamine-1-phosphate.</text>
</comment>
<comment type="catalytic activity">
    <reaction evidence="1">
        <text>alpha-D-glucosamine 1-phosphate = D-glucosamine 6-phosphate</text>
        <dbReference type="Rhea" id="RHEA:23424"/>
        <dbReference type="ChEBI" id="CHEBI:58516"/>
        <dbReference type="ChEBI" id="CHEBI:58725"/>
        <dbReference type="EC" id="5.4.2.10"/>
    </reaction>
</comment>
<comment type="cofactor">
    <cofactor evidence="1">
        <name>Mg(2+)</name>
        <dbReference type="ChEBI" id="CHEBI:18420"/>
    </cofactor>
    <text evidence="1">Binds 1 Mg(2+) ion per subunit.</text>
</comment>
<comment type="PTM">
    <text evidence="1">Activated by phosphorylation.</text>
</comment>
<comment type="similarity">
    <text evidence="1">Belongs to the phosphohexose mutase family.</text>
</comment>
<protein>
    <recommendedName>
        <fullName evidence="1">Phosphoglucosamine mutase</fullName>
        <ecNumber evidence="1">5.4.2.10</ecNumber>
    </recommendedName>
</protein>
<accession>Q7VQM5</accession>
<feature type="chain" id="PRO_0000147852" description="Phosphoglucosamine mutase">
    <location>
        <begin position="1"/>
        <end position="452"/>
    </location>
</feature>
<feature type="active site" description="Phosphoserine intermediate" evidence="1">
    <location>
        <position position="105"/>
    </location>
</feature>
<feature type="binding site" description="via phosphate group" evidence="1">
    <location>
        <position position="105"/>
    </location>
    <ligand>
        <name>Mg(2+)</name>
        <dbReference type="ChEBI" id="CHEBI:18420"/>
    </ligand>
</feature>
<feature type="binding site" evidence="1">
    <location>
        <position position="244"/>
    </location>
    <ligand>
        <name>Mg(2+)</name>
        <dbReference type="ChEBI" id="CHEBI:18420"/>
    </ligand>
</feature>
<feature type="binding site" evidence="1">
    <location>
        <position position="246"/>
    </location>
    <ligand>
        <name>Mg(2+)</name>
        <dbReference type="ChEBI" id="CHEBI:18420"/>
    </ligand>
</feature>
<feature type="binding site" evidence="1">
    <location>
        <position position="248"/>
    </location>
    <ligand>
        <name>Mg(2+)</name>
        <dbReference type="ChEBI" id="CHEBI:18420"/>
    </ligand>
</feature>
<feature type="modified residue" description="Phosphoserine" evidence="1">
    <location>
        <position position="105"/>
    </location>
</feature>
<name>GLMM_BLOFL</name>
<keyword id="KW-0413">Isomerase</keyword>
<keyword id="KW-0460">Magnesium</keyword>
<keyword id="KW-0479">Metal-binding</keyword>
<keyword id="KW-0597">Phosphoprotein</keyword>
<keyword id="KW-1185">Reference proteome</keyword>
<dbReference type="EC" id="5.4.2.10" evidence="1"/>
<dbReference type="EMBL" id="BX248583">
    <property type="protein sequence ID" value="CAD83623.1"/>
    <property type="molecule type" value="Genomic_DNA"/>
</dbReference>
<dbReference type="SMR" id="Q7VQM5"/>
<dbReference type="STRING" id="203907.Bfl100"/>
<dbReference type="KEGG" id="bfl:Bfl100"/>
<dbReference type="eggNOG" id="COG1109">
    <property type="taxonomic scope" value="Bacteria"/>
</dbReference>
<dbReference type="HOGENOM" id="CLU_016950_7_0_6"/>
<dbReference type="OrthoDB" id="9803322at2"/>
<dbReference type="Proteomes" id="UP000002192">
    <property type="component" value="Chromosome"/>
</dbReference>
<dbReference type="GO" id="GO:0005829">
    <property type="term" value="C:cytosol"/>
    <property type="evidence" value="ECO:0007669"/>
    <property type="project" value="TreeGrafter"/>
</dbReference>
<dbReference type="GO" id="GO:0000287">
    <property type="term" value="F:magnesium ion binding"/>
    <property type="evidence" value="ECO:0007669"/>
    <property type="project" value="UniProtKB-UniRule"/>
</dbReference>
<dbReference type="GO" id="GO:0008966">
    <property type="term" value="F:phosphoglucosamine mutase activity"/>
    <property type="evidence" value="ECO:0007669"/>
    <property type="project" value="UniProtKB-UniRule"/>
</dbReference>
<dbReference type="GO" id="GO:0004615">
    <property type="term" value="F:phosphomannomutase activity"/>
    <property type="evidence" value="ECO:0007669"/>
    <property type="project" value="TreeGrafter"/>
</dbReference>
<dbReference type="GO" id="GO:0005975">
    <property type="term" value="P:carbohydrate metabolic process"/>
    <property type="evidence" value="ECO:0007669"/>
    <property type="project" value="InterPro"/>
</dbReference>
<dbReference type="GO" id="GO:0009252">
    <property type="term" value="P:peptidoglycan biosynthetic process"/>
    <property type="evidence" value="ECO:0007669"/>
    <property type="project" value="TreeGrafter"/>
</dbReference>
<dbReference type="GO" id="GO:0006048">
    <property type="term" value="P:UDP-N-acetylglucosamine biosynthetic process"/>
    <property type="evidence" value="ECO:0007669"/>
    <property type="project" value="TreeGrafter"/>
</dbReference>
<dbReference type="CDD" id="cd05802">
    <property type="entry name" value="GlmM"/>
    <property type="match status" value="1"/>
</dbReference>
<dbReference type="FunFam" id="3.30.310.50:FF:000001">
    <property type="entry name" value="Phosphoglucosamine mutase"/>
    <property type="match status" value="1"/>
</dbReference>
<dbReference type="FunFam" id="3.40.120.10:FF:000001">
    <property type="entry name" value="Phosphoglucosamine mutase"/>
    <property type="match status" value="1"/>
</dbReference>
<dbReference type="FunFam" id="3.40.120.10:FF:000003">
    <property type="entry name" value="Phosphoglucosamine mutase"/>
    <property type="match status" value="1"/>
</dbReference>
<dbReference type="Gene3D" id="3.40.120.10">
    <property type="entry name" value="Alpha-D-Glucose-1,6-Bisphosphate, subunit A, domain 3"/>
    <property type="match status" value="3"/>
</dbReference>
<dbReference type="Gene3D" id="3.30.310.50">
    <property type="entry name" value="Alpha-D-phosphohexomutase, C-terminal domain"/>
    <property type="match status" value="1"/>
</dbReference>
<dbReference type="HAMAP" id="MF_01554_B">
    <property type="entry name" value="GlmM_B"/>
    <property type="match status" value="1"/>
</dbReference>
<dbReference type="InterPro" id="IPR005844">
    <property type="entry name" value="A-D-PHexomutase_a/b/a-I"/>
</dbReference>
<dbReference type="InterPro" id="IPR016055">
    <property type="entry name" value="A-D-PHexomutase_a/b/a-I/II/III"/>
</dbReference>
<dbReference type="InterPro" id="IPR005845">
    <property type="entry name" value="A-D-PHexomutase_a/b/a-II"/>
</dbReference>
<dbReference type="InterPro" id="IPR005846">
    <property type="entry name" value="A-D-PHexomutase_a/b/a-III"/>
</dbReference>
<dbReference type="InterPro" id="IPR005843">
    <property type="entry name" value="A-D-PHexomutase_C"/>
</dbReference>
<dbReference type="InterPro" id="IPR036900">
    <property type="entry name" value="A-D-PHexomutase_C_sf"/>
</dbReference>
<dbReference type="InterPro" id="IPR016066">
    <property type="entry name" value="A-D-PHexomutase_CS"/>
</dbReference>
<dbReference type="InterPro" id="IPR005841">
    <property type="entry name" value="Alpha-D-phosphohexomutase_SF"/>
</dbReference>
<dbReference type="InterPro" id="IPR006352">
    <property type="entry name" value="GlmM_bact"/>
</dbReference>
<dbReference type="InterPro" id="IPR050060">
    <property type="entry name" value="Phosphoglucosamine_mutase"/>
</dbReference>
<dbReference type="NCBIfam" id="TIGR01455">
    <property type="entry name" value="glmM"/>
    <property type="match status" value="1"/>
</dbReference>
<dbReference type="NCBIfam" id="NF008139">
    <property type="entry name" value="PRK10887.1"/>
    <property type="match status" value="1"/>
</dbReference>
<dbReference type="PANTHER" id="PTHR42946:SF1">
    <property type="entry name" value="PHOSPHOGLUCOMUTASE (ALPHA-D-GLUCOSE-1,6-BISPHOSPHATE-DEPENDENT)"/>
    <property type="match status" value="1"/>
</dbReference>
<dbReference type="PANTHER" id="PTHR42946">
    <property type="entry name" value="PHOSPHOHEXOSE MUTASE"/>
    <property type="match status" value="1"/>
</dbReference>
<dbReference type="Pfam" id="PF02878">
    <property type="entry name" value="PGM_PMM_I"/>
    <property type="match status" value="1"/>
</dbReference>
<dbReference type="Pfam" id="PF02879">
    <property type="entry name" value="PGM_PMM_II"/>
    <property type="match status" value="1"/>
</dbReference>
<dbReference type="Pfam" id="PF02880">
    <property type="entry name" value="PGM_PMM_III"/>
    <property type="match status" value="1"/>
</dbReference>
<dbReference type="Pfam" id="PF00408">
    <property type="entry name" value="PGM_PMM_IV"/>
    <property type="match status" value="1"/>
</dbReference>
<dbReference type="PRINTS" id="PR00509">
    <property type="entry name" value="PGMPMM"/>
</dbReference>
<dbReference type="SUPFAM" id="SSF55957">
    <property type="entry name" value="Phosphoglucomutase, C-terminal domain"/>
    <property type="match status" value="1"/>
</dbReference>
<dbReference type="SUPFAM" id="SSF53738">
    <property type="entry name" value="Phosphoglucomutase, first 3 domains"/>
    <property type="match status" value="3"/>
</dbReference>
<dbReference type="PROSITE" id="PS00710">
    <property type="entry name" value="PGM_PMM"/>
    <property type="match status" value="1"/>
</dbReference>